<dbReference type="EC" id="4.2.1.33" evidence="1"/>
<dbReference type="EMBL" id="CP000302">
    <property type="protein sequence ID" value="ABE53632.1"/>
    <property type="molecule type" value="Genomic_DNA"/>
</dbReference>
<dbReference type="RefSeq" id="WP_011494799.1">
    <property type="nucleotide sequence ID" value="NC_007954.1"/>
</dbReference>
<dbReference type="SMR" id="Q12SE4"/>
<dbReference type="STRING" id="318161.Sden_0337"/>
<dbReference type="KEGG" id="sdn:Sden_0337"/>
<dbReference type="eggNOG" id="COG0066">
    <property type="taxonomic scope" value="Bacteria"/>
</dbReference>
<dbReference type="HOGENOM" id="CLU_081378_0_3_6"/>
<dbReference type="OrthoDB" id="9777465at2"/>
<dbReference type="UniPathway" id="UPA00048">
    <property type="reaction ID" value="UER00071"/>
</dbReference>
<dbReference type="Proteomes" id="UP000001982">
    <property type="component" value="Chromosome"/>
</dbReference>
<dbReference type="GO" id="GO:0009316">
    <property type="term" value="C:3-isopropylmalate dehydratase complex"/>
    <property type="evidence" value="ECO:0007669"/>
    <property type="project" value="InterPro"/>
</dbReference>
<dbReference type="GO" id="GO:0003861">
    <property type="term" value="F:3-isopropylmalate dehydratase activity"/>
    <property type="evidence" value="ECO:0007669"/>
    <property type="project" value="UniProtKB-UniRule"/>
</dbReference>
<dbReference type="GO" id="GO:0009098">
    <property type="term" value="P:L-leucine biosynthetic process"/>
    <property type="evidence" value="ECO:0007669"/>
    <property type="project" value="UniProtKB-UniRule"/>
</dbReference>
<dbReference type="CDD" id="cd01577">
    <property type="entry name" value="IPMI_Swivel"/>
    <property type="match status" value="1"/>
</dbReference>
<dbReference type="FunFam" id="3.20.19.10:FF:000003">
    <property type="entry name" value="3-isopropylmalate dehydratase small subunit"/>
    <property type="match status" value="1"/>
</dbReference>
<dbReference type="Gene3D" id="3.20.19.10">
    <property type="entry name" value="Aconitase, domain 4"/>
    <property type="match status" value="1"/>
</dbReference>
<dbReference type="HAMAP" id="MF_01031">
    <property type="entry name" value="LeuD_type1"/>
    <property type="match status" value="1"/>
</dbReference>
<dbReference type="InterPro" id="IPR004431">
    <property type="entry name" value="3-IsopropMal_deHydase_ssu"/>
</dbReference>
<dbReference type="InterPro" id="IPR015928">
    <property type="entry name" value="Aconitase/3IPM_dehydase_swvl"/>
</dbReference>
<dbReference type="InterPro" id="IPR000573">
    <property type="entry name" value="AconitaseA/IPMdHydase_ssu_swvl"/>
</dbReference>
<dbReference type="InterPro" id="IPR033940">
    <property type="entry name" value="IPMI_Swivel"/>
</dbReference>
<dbReference type="InterPro" id="IPR050075">
    <property type="entry name" value="LeuD"/>
</dbReference>
<dbReference type="NCBIfam" id="TIGR00171">
    <property type="entry name" value="leuD"/>
    <property type="match status" value="1"/>
</dbReference>
<dbReference type="NCBIfam" id="NF002458">
    <property type="entry name" value="PRK01641.1"/>
    <property type="match status" value="1"/>
</dbReference>
<dbReference type="PANTHER" id="PTHR43345:SF5">
    <property type="entry name" value="3-ISOPROPYLMALATE DEHYDRATASE SMALL SUBUNIT"/>
    <property type="match status" value="1"/>
</dbReference>
<dbReference type="PANTHER" id="PTHR43345">
    <property type="entry name" value="3-ISOPROPYLMALATE DEHYDRATASE SMALL SUBUNIT 2-RELATED-RELATED"/>
    <property type="match status" value="1"/>
</dbReference>
<dbReference type="Pfam" id="PF00694">
    <property type="entry name" value="Aconitase_C"/>
    <property type="match status" value="1"/>
</dbReference>
<dbReference type="SUPFAM" id="SSF52016">
    <property type="entry name" value="LeuD/IlvD-like"/>
    <property type="match status" value="1"/>
</dbReference>
<accession>Q12SE4</accession>
<proteinExistence type="inferred from homology"/>
<protein>
    <recommendedName>
        <fullName evidence="1">3-isopropylmalate dehydratase small subunit</fullName>
        <ecNumber evidence="1">4.2.1.33</ecNumber>
    </recommendedName>
    <alternativeName>
        <fullName evidence="1">Alpha-IPM isomerase</fullName>
        <shortName evidence="1">IPMI</shortName>
    </alternativeName>
    <alternativeName>
        <fullName evidence="1">Isopropylmalate isomerase</fullName>
    </alternativeName>
</protein>
<reference key="1">
    <citation type="submission" date="2006-03" db="EMBL/GenBank/DDBJ databases">
        <title>Complete sequence of Shewanella denitrificans OS217.</title>
        <authorList>
            <consortium name="US DOE Joint Genome Institute"/>
            <person name="Copeland A."/>
            <person name="Lucas S."/>
            <person name="Lapidus A."/>
            <person name="Barry K."/>
            <person name="Detter J.C."/>
            <person name="Glavina del Rio T."/>
            <person name="Hammon N."/>
            <person name="Israni S."/>
            <person name="Dalin E."/>
            <person name="Tice H."/>
            <person name="Pitluck S."/>
            <person name="Brettin T."/>
            <person name="Bruce D."/>
            <person name="Han C."/>
            <person name="Tapia R."/>
            <person name="Gilna P."/>
            <person name="Kiss H."/>
            <person name="Schmutz J."/>
            <person name="Larimer F."/>
            <person name="Land M."/>
            <person name="Hauser L."/>
            <person name="Kyrpides N."/>
            <person name="Lykidis A."/>
            <person name="Richardson P."/>
        </authorList>
    </citation>
    <scope>NUCLEOTIDE SEQUENCE [LARGE SCALE GENOMIC DNA]</scope>
    <source>
        <strain>OS217 / ATCC BAA-1090 / DSM 15013</strain>
    </source>
</reference>
<keyword id="KW-0028">Amino-acid biosynthesis</keyword>
<keyword id="KW-0100">Branched-chain amino acid biosynthesis</keyword>
<keyword id="KW-0432">Leucine biosynthesis</keyword>
<keyword id="KW-0456">Lyase</keyword>
<keyword id="KW-1185">Reference proteome</keyword>
<gene>
    <name evidence="1" type="primary">leuD</name>
    <name type="ordered locus">Sden_0337</name>
</gene>
<name>LEUD_SHEDO</name>
<sequence>MQAFTAHSGLAVAIDSANIDTDQIIPKQFLSKVTRDGFGVHLFHDWRYLDDAGEKPNPEFVLNQSRYKGASILLAQENFGCGSSREHAPWALADFGLRVVIAPSFADIFYGNAINNGLLPVVLTQAQVQQLMDEVQGELGAQVSVDLQLLRVISPSGAEFPFSLVESARHKLLNGLDAVGETLTHGQAISAYEANIPAWLA</sequence>
<evidence type="ECO:0000255" key="1">
    <source>
        <dbReference type="HAMAP-Rule" id="MF_01031"/>
    </source>
</evidence>
<feature type="chain" id="PRO_1000063833" description="3-isopropylmalate dehydratase small subunit">
    <location>
        <begin position="1"/>
        <end position="201"/>
    </location>
</feature>
<comment type="function">
    <text evidence="1">Catalyzes the isomerization between 2-isopropylmalate and 3-isopropylmalate, via the formation of 2-isopropylmaleate.</text>
</comment>
<comment type="catalytic activity">
    <reaction evidence="1">
        <text>(2R,3S)-3-isopropylmalate = (2S)-2-isopropylmalate</text>
        <dbReference type="Rhea" id="RHEA:32287"/>
        <dbReference type="ChEBI" id="CHEBI:1178"/>
        <dbReference type="ChEBI" id="CHEBI:35121"/>
        <dbReference type="EC" id="4.2.1.33"/>
    </reaction>
</comment>
<comment type="pathway">
    <text evidence="1">Amino-acid biosynthesis; L-leucine biosynthesis; L-leucine from 3-methyl-2-oxobutanoate: step 2/4.</text>
</comment>
<comment type="subunit">
    <text evidence="1">Heterodimer of LeuC and LeuD.</text>
</comment>
<comment type="similarity">
    <text evidence="1">Belongs to the LeuD family. LeuD type 1 subfamily.</text>
</comment>
<organism>
    <name type="scientific">Shewanella denitrificans (strain OS217 / ATCC BAA-1090 / DSM 15013)</name>
    <dbReference type="NCBI Taxonomy" id="318161"/>
    <lineage>
        <taxon>Bacteria</taxon>
        <taxon>Pseudomonadati</taxon>
        <taxon>Pseudomonadota</taxon>
        <taxon>Gammaproteobacteria</taxon>
        <taxon>Alteromonadales</taxon>
        <taxon>Shewanellaceae</taxon>
        <taxon>Shewanella</taxon>
    </lineage>
</organism>